<reference key="1">
    <citation type="journal article" date="2010" name="Genome Biol.">
        <title>Structure and dynamics of the pan-genome of Streptococcus pneumoniae and closely related species.</title>
        <authorList>
            <person name="Donati C."/>
            <person name="Hiller N.L."/>
            <person name="Tettelin H."/>
            <person name="Muzzi A."/>
            <person name="Croucher N.J."/>
            <person name="Angiuoli S.V."/>
            <person name="Oggioni M."/>
            <person name="Dunning Hotopp J.C."/>
            <person name="Hu F.Z."/>
            <person name="Riley D.R."/>
            <person name="Covacci A."/>
            <person name="Mitchell T.J."/>
            <person name="Bentley S.D."/>
            <person name="Kilian M."/>
            <person name="Ehrlich G.D."/>
            <person name="Rappuoli R."/>
            <person name="Moxon E.R."/>
            <person name="Masignani V."/>
        </authorList>
    </citation>
    <scope>NUCLEOTIDE SEQUENCE [LARGE SCALE GENOMIC DNA]</scope>
    <source>
        <strain>Taiwan19F-14</strain>
    </source>
</reference>
<sequence length="235" mass="26256">MIYAGILAGGTGTRMGISNLPKQFLELGDRPILIHTIEKFVLEPSIEKIVVGVHGDWVSHAEDLVDKYLPLYKERIIITKGGADRNTSIKKIIEAIDAYRPLTPEDIVVTHDSVRPFITLRMIQDNIQLAQNHDAVDTVVEAVDTIVESTNGQFITDIPNRAHLYQGQTPQTFRCKDFMDLYGSLSDEEKEILTDACKIFVIKGKDVALAKGEYSNLKITTVTDLKIAKSMIEKD</sequence>
<organism>
    <name type="scientific">Streptococcus pneumoniae (strain Taiwan19F-14)</name>
    <dbReference type="NCBI Taxonomy" id="487213"/>
    <lineage>
        <taxon>Bacteria</taxon>
        <taxon>Bacillati</taxon>
        <taxon>Bacillota</taxon>
        <taxon>Bacilli</taxon>
        <taxon>Lactobacillales</taxon>
        <taxon>Streptococcaceae</taxon>
        <taxon>Streptococcus</taxon>
    </lineage>
</organism>
<comment type="function">
    <text evidence="1">Catalyzes the transfer of the cytidylyl group of CTP to D-ribitol 5-phosphate.</text>
</comment>
<comment type="catalytic activity">
    <reaction evidence="1">
        <text>D-ribitol 5-phosphate + CTP + H(+) = CDP-L-ribitol + diphosphate</text>
        <dbReference type="Rhea" id="RHEA:12456"/>
        <dbReference type="ChEBI" id="CHEBI:15378"/>
        <dbReference type="ChEBI" id="CHEBI:33019"/>
        <dbReference type="ChEBI" id="CHEBI:37563"/>
        <dbReference type="ChEBI" id="CHEBI:57608"/>
        <dbReference type="ChEBI" id="CHEBI:57695"/>
        <dbReference type="EC" id="2.7.7.40"/>
    </reaction>
</comment>
<comment type="pathway">
    <text evidence="1">Cell wall biogenesis; poly(ribitol phosphate) teichoic acid biosynthesis.</text>
</comment>
<comment type="similarity">
    <text evidence="1">Belongs to the IspD/TarI cytidylyltransferase family. TarI subfamily.</text>
</comment>
<proteinExistence type="inferred from homology"/>
<protein>
    <recommendedName>
        <fullName evidence="1">Ribitol-5-phosphate cytidylyltransferase</fullName>
        <ecNumber evidence="1">2.7.7.40</ecNumber>
    </recommendedName>
</protein>
<feature type="chain" id="PRO_1000119040" description="Ribitol-5-phosphate cytidylyltransferase">
    <location>
        <begin position="1"/>
        <end position="235"/>
    </location>
</feature>
<feature type="binding site" evidence="1">
    <location>
        <begin position="7"/>
        <end position="10"/>
    </location>
    <ligand>
        <name>CTP</name>
        <dbReference type="ChEBI" id="CHEBI:37563"/>
    </ligand>
</feature>
<feature type="binding site" evidence="1">
    <location>
        <begin position="82"/>
        <end position="88"/>
    </location>
    <ligand>
        <name>CTP</name>
        <dbReference type="ChEBI" id="CHEBI:37563"/>
    </ligand>
</feature>
<feature type="binding site" evidence="1">
    <location>
        <position position="113"/>
    </location>
    <ligand>
        <name>CTP</name>
        <dbReference type="ChEBI" id="CHEBI:37563"/>
    </ligand>
</feature>
<feature type="site" description="Transition state stabilizer" evidence="1">
    <location>
        <position position="14"/>
    </location>
</feature>
<feature type="site" description="Transition state stabilizer" evidence="1">
    <location>
        <position position="22"/>
    </location>
</feature>
<feature type="site" description="Positions ribitol 5-phosphate for the nucleophilic attack" evidence="1">
    <location>
        <position position="161"/>
    </location>
</feature>
<feature type="site" description="Positions ribitol 5-phosphate for the nucleophilic attack" evidence="1">
    <location>
        <position position="218"/>
    </location>
</feature>
<gene>
    <name evidence="1" type="primary">tarI</name>
    <name type="ordered locus">SPT_0957</name>
</gene>
<keyword id="KW-0961">Cell wall biogenesis/degradation</keyword>
<keyword id="KW-0548">Nucleotidyltransferase</keyword>
<keyword id="KW-0777">Teichoic acid biosynthesis</keyword>
<keyword id="KW-0808">Transferase</keyword>
<dbReference type="EC" id="2.7.7.40" evidence="1"/>
<dbReference type="EMBL" id="CP000921">
    <property type="protein sequence ID" value="ACO22520.1"/>
    <property type="molecule type" value="Genomic_DNA"/>
</dbReference>
<dbReference type="RefSeq" id="WP_000638502.1">
    <property type="nucleotide sequence ID" value="NC_012469.1"/>
</dbReference>
<dbReference type="SMR" id="C1CR35"/>
<dbReference type="KEGG" id="snt:SPT_0957"/>
<dbReference type="HOGENOM" id="CLU_061281_2_3_9"/>
<dbReference type="UniPathway" id="UPA00790"/>
<dbReference type="GO" id="GO:0050518">
    <property type="term" value="F:2-C-methyl-D-erythritol 4-phosphate cytidylyltransferase activity"/>
    <property type="evidence" value="ECO:0007669"/>
    <property type="project" value="TreeGrafter"/>
</dbReference>
<dbReference type="GO" id="GO:0047349">
    <property type="term" value="F:D-ribitol-5-phosphate cytidylyltransferase activity"/>
    <property type="evidence" value="ECO:0007669"/>
    <property type="project" value="UniProtKB-UniRule"/>
</dbReference>
<dbReference type="GO" id="GO:0071555">
    <property type="term" value="P:cell wall organization"/>
    <property type="evidence" value="ECO:0007669"/>
    <property type="project" value="UniProtKB-KW"/>
</dbReference>
<dbReference type="GO" id="GO:0008299">
    <property type="term" value="P:isoprenoid biosynthetic process"/>
    <property type="evidence" value="ECO:0007669"/>
    <property type="project" value="InterPro"/>
</dbReference>
<dbReference type="GO" id="GO:1902012">
    <property type="term" value="P:poly(ribitol phosphate) teichoic acid biosynthetic process"/>
    <property type="evidence" value="ECO:0007669"/>
    <property type="project" value="UniProtKB-UniRule"/>
</dbReference>
<dbReference type="CDD" id="cd02516">
    <property type="entry name" value="CDP-ME_synthetase"/>
    <property type="match status" value="1"/>
</dbReference>
<dbReference type="FunFam" id="3.90.550.10:FF:000003">
    <property type="entry name" value="2-C-methyl-D-erythritol 4-phosphate cytidylyltransferase"/>
    <property type="match status" value="1"/>
</dbReference>
<dbReference type="Gene3D" id="3.90.550.10">
    <property type="entry name" value="Spore Coat Polysaccharide Biosynthesis Protein SpsA, Chain A"/>
    <property type="match status" value="1"/>
</dbReference>
<dbReference type="HAMAP" id="MF_02068">
    <property type="entry name" value="TarI"/>
    <property type="match status" value="1"/>
</dbReference>
<dbReference type="InterPro" id="IPR034683">
    <property type="entry name" value="IspD/TarI"/>
</dbReference>
<dbReference type="InterPro" id="IPR050088">
    <property type="entry name" value="IspD/TarI_cytidylyltransf_bact"/>
</dbReference>
<dbReference type="InterPro" id="IPR018294">
    <property type="entry name" value="ISPD_synthase_CS"/>
</dbReference>
<dbReference type="InterPro" id="IPR029044">
    <property type="entry name" value="Nucleotide-diphossugar_trans"/>
</dbReference>
<dbReference type="InterPro" id="IPR034709">
    <property type="entry name" value="TarI"/>
</dbReference>
<dbReference type="NCBIfam" id="NF001183">
    <property type="entry name" value="PRK00155.1-3"/>
    <property type="match status" value="1"/>
</dbReference>
<dbReference type="PANTHER" id="PTHR32125">
    <property type="entry name" value="2-C-METHYL-D-ERYTHRITOL 4-PHOSPHATE CYTIDYLYLTRANSFERASE, CHLOROPLASTIC"/>
    <property type="match status" value="1"/>
</dbReference>
<dbReference type="PANTHER" id="PTHR32125:SF8">
    <property type="entry name" value="RIBITOL-5-PHOSPHATE CYTIDYLYLTRANSFERASE"/>
    <property type="match status" value="1"/>
</dbReference>
<dbReference type="Pfam" id="PF01128">
    <property type="entry name" value="IspD"/>
    <property type="match status" value="1"/>
</dbReference>
<dbReference type="SUPFAM" id="SSF53448">
    <property type="entry name" value="Nucleotide-diphospho-sugar transferases"/>
    <property type="match status" value="1"/>
</dbReference>
<dbReference type="PROSITE" id="PS01295">
    <property type="entry name" value="ISPD"/>
    <property type="match status" value="1"/>
</dbReference>
<accession>C1CR35</accession>
<evidence type="ECO:0000255" key="1">
    <source>
        <dbReference type="HAMAP-Rule" id="MF_02068"/>
    </source>
</evidence>
<name>TARI_STRZT</name>